<gene>
    <name evidence="1" type="primary">pyrD</name>
    <name type="ordered locus">BCAN_A0319</name>
</gene>
<feature type="chain" id="PRO_1000078154" description="Dihydroorotate dehydrogenase (quinone)">
    <location>
        <begin position="1"/>
        <end position="364"/>
    </location>
</feature>
<feature type="active site" description="Nucleophile" evidence="1">
    <location>
        <position position="173"/>
    </location>
</feature>
<feature type="binding site" evidence="1">
    <location>
        <begin position="61"/>
        <end position="65"/>
    </location>
    <ligand>
        <name>FMN</name>
        <dbReference type="ChEBI" id="CHEBI:58210"/>
    </ligand>
</feature>
<feature type="binding site" evidence="1">
    <location>
        <position position="65"/>
    </location>
    <ligand>
        <name>substrate</name>
    </ligand>
</feature>
<feature type="binding site" evidence="1">
    <location>
        <position position="85"/>
    </location>
    <ligand>
        <name>FMN</name>
        <dbReference type="ChEBI" id="CHEBI:58210"/>
    </ligand>
</feature>
<feature type="binding site" evidence="1">
    <location>
        <begin position="110"/>
        <end position="114"/>
    </location>
    <ligand>
        <name>substrate</name>
    </ligand>
</feature>
<feature type="binding site" evidence="1">
    <location>
        <position position="139"/>
    </location>
    <ligand>
        <name>FMN</name>
        <dbReference type="ChEBI" id="CHEBI:58210"/>
    </ligand>
</feature>
<feature type="binding site" evidence="1">
    <location>
        <position position="170"/>
    </location>
    <ligand>
        <name>FMN</name>
        <dbReference type="ChEBI" id="CHEBI:58210"/>
    </ligand>
</feature>
<feature type="binding site" evidence="1">
    <location>
        <position position="170"/>
    </location>
    <ligand>
        <name>substrate</name>
    </ligand>
</feature>
<feature type="binding site" evidence="1">
    <location>
        <position position="175"/>
    </location>
    <ligand>
        <name>substrate</name>
    </ligand>
</feature>
<feature type="binding site" evidence="1">
    <location>
        <position position="215"/>
    </location>
    <ligand>
        <name>FMN</name>
        <dbReference type="ChEBI" id="CHEBI:58210"/>
    </ligand>
</feature>
<feature type="binding site" evidence="1">
    <location>
        <position position="243"/>
    </location>
    <ligand>
        <name>FMN</name>
        <dbReference type="ChEBI" id="CHEBI:58210"/>
    </ligand>
</feature>
<feature type="binding site" evidence="1">
    <location>
        <begin position="244"/>
        <end position="245"/>
    </location>
    <ligand>
        <name>substrate</name>
    </ligand>
</feature>
<feature type="binding site" evidence="1">
    <location>
        <position position="266"/>
    </location>
    <ligand>
        <name>FMN</name>
        <dbReference type="ChEBI" id="CHEBI:58210"/>
    </ligand>
</feature>
<feature type="binding site" evidence="1">
    <location>
        <position position="295"/>
    </location>
    <ligand>
        <name>FMN</name>
        <dbReference type="ChEBI" id="CHEBI:58210"/>
    </ligand>
</feature>
<feature type="binding site" evidence="1">
    <location>
        <begin position="316"/>
        <end position="317"/>
    </location>
    <ligand>
        <name>FMN</name>
        <dbReference type="ChEBI" id="CHEBI:58210"/>
    </ligand>
</feature>
<comment type="function">
    <text evidence="1">Catalyzes the conversion of dihydroorotate to orotate with quinone as electron acceptor.</text>
</comment>
<comment type="catalytic activity">
    <reaction evidence="1">
        <text>(S)-dihydroorotate + a quinone = orotate + a quinol</text>
        <dbReference type="Rhea" id="RHEA:30187"/>
        <dbReference type="ChEBI" id="CHEBI:24646"/>
        <dbReference type="ChEBI" id="CHEBI:30839"/>
        <dbReference type="ChEBI" id="CHEBI:30864"/>
        <dbReference type="ChEBI" id="CHEBI:132124"/>
        <dbReference type="EC" id="1.3.5.2"/>
    </reaction>
</comment>
<comment type="cofactor">
    <cofactor evidence="1">
        <name>FMN</name>
        <dbReference type="ChEBI" id="CHEBI:58210"/>
    </cofactor>
    <text evidence="1">Binds 1 FMN per subunit.</text>
</comment>
<comment type="pathway">
    <text evidence="1">Pyrimidine metabolism; UMP biosynthesis via de novo pathway; orotate from (S)-dihydroorotate (quinone route): step 1/1.</text>
</comment>
<comment type="subunit">
    <text evidence="1">Monomer.</text>
</comment>
<comment type="subcellular location">
    <subcellularLocation>
        <location evidence="1">Cell membrane</location>
        <topology evidence="1">Peripheral membrane protein</topology>
    </subcellularLocation>
</comment>
<comment type="similarity">
    <text evidence="1">Belongs to the dihydroorotate dehydrogenase family. Type 2 subfamily.</text>
</comment>
<accession>A9M7Z9</accession>
<keyword id="KW-1003">Cell membrane</keyword>
<keyword id="KW-0285">Flavoprotein</keyword>
<keyword id="KW-0288">FMN</keyword>
<keyword id="KW-0472">Membrane</keyword>
<keyword id="KW-0560">Oxidoreductase</keyword>
<keyword id="KW-0665">Pyrimidine biosynthesis</keyword>
<keyword id="KW-1185">Reference proteome</keyword>
<protein>
    <recommendedName>
        <fullName evidence="1">Dihydroorotate dehydrogenase (quinone)</fullName>
        <ecNumber evidence="1">1.3.5.2</ecNumber>
    </recommendedName>
    <alternativeName>
        <fullName evidence="1">DHOdehase</fullName>
        <shortName evidence="1">DHOD</shortName>
        <shortName evidence="1">DHODase</shortName>
    </alternativeName>
    <alternativeName>
        <fullName evidence="1">Dihydroorotate oxidase</fullName>
    </alternativeName>
</protein>
<evidence type="ECO:0000255" key="1">
    <source>
        <dbReference type="HAMAP-Rule" id="MF_00225"/>
    </source>
</evidence>
<dbReference type="EC" id="1.3.5.2" evidence="1"/>
<dbReference type="EMBL" id="CP000872">
    <property type="protein sequence ID" value="ABX61409.1"/>
    <property type="molecule type" value="Genomic_DNA"/>
</dbReference>
<dbReference type="RefSeq" id="WP_004687981.1">
    <property type="nucleotide sequence ID" value="NC_010103.1"/>
</dbReference>
<dbReference type="SMR" id="A9M7Z9"/>
<dbReference type="KEGG" id="bcs:BCAN_A0319"/>
<dbReference type="HOGENOM" id="CLU_013640_2_1_5"/>
<dbReference type="PhylomeDB" id="A9M7Z9"/>
<dbReference type="UniPathway" id="UPA00070">
    <property type="reaction ID" value="UER00946"/>
</dbReference>
<dbReference type="PRO" id="PR:A9M7Z9"/>
<dbReference type="Proteomes" id="UP000001385">
    <property type="component" value="Chromosome I"/>
</dbReference>
<dbReference type="GO" id="GO:0005737">
    <property type="term" value="C:cytoplasm"/>
    <property type="evidence" value="ECO:0007669"/>
    <property type="project" value="InterPro"/>
</dbReference>
<dbReference type="GO" id="GO:0005886">
    <property type="term" value="C:plasma membrane"/>
    <property type="evidence" value="ECO:0007669"/>
    <property type="project" value="UniProtKB-SubCell"/>
</dbReference>
<dbReference type="GO" id="GO:0106430">
    <property type="term" value="F:dihydroorotate dehydrogenase (quinone) activity"/>
    <property type="evidence" value="ECO:0007669"/>
    <property type="project" value="UniProtKB-EC"/>
</dbReference>
<dbReference type="GO" id="GO:0006207">
    <property type="term" value="P:'de novo' pyrimidine nucleobase biosynthetic process"/>
    <property type="evidence" value="ECO:0007669"/>
    <property type="project" value="InterPro"/>
</dbReference>
<dbReference type="GO" id="GO:0044205">
    <property type="term" value="P:'de novo' UMP biosynthetic process"/>
    <property type="evidence" value="ECO:0007669"/>
    <property type="project" value="UniProtKB-UniRule"/>
</dbReference>
<dbReference type="CDD" id="cd04738">
    <property type="entry name" value="DHOD_2_like"/>
    <property type="match status" value="1"/>
</dbReference>
<dbReference type="Gene3D" id="3.20.20.70">
    <property type="entry name" value="Aldolase class I"/>
    <property type="match status" value="1"/>
</dbReference>
<dbReference type="HAMAP" id="MF_00225">
    <property type="entry name" value="DHO_dh_type2"/>
    <property type="match status" value="1"/>
</dbReference>
<dbReference type="InterPro" id="IPR013785">
    <property type="entry name" value="Aldolase_TIM"/>
</dbReference>
<dbReference type="InterPro" id="IPR050074">
    <property type="entry name" value="DHO_dehydrogenase"/>
</dbReference>
<dbReference type="InterPro" id="IPR005719">
    <property type="entry name" value="Dihydroorotate_DH_2"/>
</dbReference>
<dbReference type="InterPro" id="IPR005720">
    <property type="entry name" value="Dihydroorotate_DH_cat"/>
</dbReference>
<dbReference type="InterPro" id="IPR001295">
    <property type="entry name" value="Dihydroorotate_DH_CS"/>
</dbReference>
<dbReference type="NCBIfam" id="NF003645">
    <property type="entry name" value="PRK05286.1-2"/>
    <property type="match status" value="1"/>
</dbReference>
<dbReference type="NCBIfam" id="NF003652">
    <property type="entry name" value="PRK05286.2-5"/>
    <property type="match status" value="1"/>
</dbReference>
<dbReference type="NCBIfam" id="TIGR01036">
    <property type="entry name" value="pyrD_sub2"/>
    <property type="match status" value="1"/>
</dbReference>
<dbReference type="PANTHER" id="PTHR48109:SF4">
    <property type="entry name" value="DIHYDROOROTATE DEHYDROGENASE (QUINONE), MITOCHONDRIAL"/>
    <property type="match status" value="1"/>
</dbReference>
<dbReference type="PANTHER" id="PTHR48109">
    <property type="entry name" value="DIHYDROOROTATE DEHYDROGENASE (QUINONE), MITOCHONDRIAL-RELATED"/>
    <property type="match status" value="1"/>
</dbReference>
<dbReference type="Pfam" id="PF01180">
    <property type="entry name" value="DHO_dh"/>
    <property type="match status" value="1"/>
</dbReference>
<dbReference type="SUPFAM" id="SSF51395">
    <property type="entry name" value="FMN-linked oxidoreductases"/>
    <property type="match status" value="1"/>
</dbReference>
<dbReference type="PROSITE" id="PS00911">
    <property type="entry name" value="DHODEHASE_1"/>
    <property type="match status" value="1"/>
</dbReference>
<dbReference type="PROSITE" id="PS00912">
    <property type="entry name" value="DHODEHASE_2"/>
    <property type="match status" value="1"/>
</dbReference>
<sequence>MSGLFETLGRRALFTFDAEQAHGLSITGLKTGIVTCRTPEDPALSVKVAGLKFPNPLGMAAGYDKNAEVPDALLKLGFGFAEVGTLTPRPQSGNPRPRIFRLVDDKAVINRLGFNNEGHEAAFKRLSRRAGKSGIVGVNIGANKDAEDRIADYVAGIRRFYQLARYFTVNISSPNTPGLRNLQAREALHELLSRVLEARDEEGNMCTLKRPVFLKIAPDLTDEELDDIAAEADAQKLDGIIVSNTTLSRSGLKNPENSNETGGLSGAPLFERSTVVLARMRERVGPDMPLIGVGGIDSAETALAKIKAGADLVQLYTGLIYRGPGLPGEILRGLSTAIKHEGVSSIAELRDRDTKEWAARKLIS</sequence>
<proteinExistence type="inferred from homology"/>
<reference key="1">
    <citation type="submission" date="2007-10" db="EMBL/GenBank/DDBJ databases">
        <title>Brucella canis ATCC 23365 whole genome shotgun sequencing project.</title>
        <authorList>
            <person name="Setubal J.C."/>
            <person name="Bowns C."/>
            <person name="Boyle S."/>
            <person name="Crasta O.R."/>
            <person name="Czar M.J."/>
            <person name="Dharmanolla C."/>
            <person name="Gillespie J.J."/>
            <person name="Kenyon R.W."/>
            <person name="Lu J."/>
            <person name="Mane S."/>
            <person name="Mohapatra S."/>
            <person name="Nagrani S."/>
            <person name="Purkayastha A."/>
            <person name="Rajasimha H.K."/>
            <person name="Shallom J.M."/>
            <person name="Shallom S."/>
            <person name="Shukla M."/>
            <person name="Snyder E.E."/>
            <person name="Sobral B.W."/>
            <person name="Wattam A.R."/>
            <person name="Will R."/>
            <person name="Williams K."/>
            <person name="Yoo H."/>
            <person name="Bruce D."/>
            <person name="Detter C."/>
            <person name="Munk C."/>
            <person name="Brettin T.S."/>
        </authorList>
    </citation>
    <scope>NUCLEOTIDE SEQUENCE [LARGE SCALE GENOMIC DNA]</scope>
    <source>
        <strain>ATCC 23365 / NCTC 10854 / RM-666</strain>
    </source>
</reference>
<organism>
    <name type="scientific">Brucella canis (strain ATCC 23365 / NCTC 10854 / RM-666)</name>
    <dbReference type="NCBI Taxonomy" id="483179"/>
    <lineage>
        <taxon>Bacteria</taxon>
        <taxon>Pseudomonadati</taxon>
        <taxon>Pseudomonadota</taxon>
        <taxon>Alphaproteobacteria</taxon>
        <taxon>Hyphomicrobiales</taxon>
        <taxon>Brucellaceae</taxon>
        <taxon>Brucella/Ochrobactrum group</taxon>
        <taxon>Brucella</taxon>
    </lineage>
</organism>
<name>PYRD_BRUC2</name>